<reference key="1">
    <citation type="submission" date="2007-04" db="EMBL/GenBank/DDBJ databases">
        <title>Complete genome sequence of the nitrogen-fixing bacterium Azorhizobium caulinodans ORS571.</title>
        <authorList>
            <person name="Lee K.B."/>
            <person name="Backer P.D."/>
            <person name="Aono T."/>
            <person name="Liu C.T."/>
            <person name="Suzuki S."/>
            <person name="Suzuki T."/>
            <person name="Kaneko T."/>
            <person name="Yamada M."/>
            <person name="Tabata S."/>
            <person name="Kupfer D.M."/>
            <person name="Najar F.Z."/>
            <person name="Wiley G.B."/>
            <person name="Roe B."/>
            <person name="Binnewies T."/>
            <person name="Ussery D."/>
            <person name="Vereecke D."/>
            <person name="Gevers D."/>
            <person name="Holsters M."/>
            <person name="Oyaizu H."/>
        </authorList>
    </citation>
    <scope>NUCLEOTIDE SEQUENCE [LARGE SCALE GENOMIC DNA]</scope>
    <source>
        <strain>ATCC 43989 / DSM 5975 / JCM 20966 / LMG 6465 / NBRC 14845 / NCIMB 13405 / ORS 571</strain>
    </source>
</reference>
<organism>
    <name type="scientific">Azorhizobium caulinodans (strain ATCC 43989 / DSM 5975 / JCM 20966 / LMG 6465 / NBRC 14845 / NCIMB 13405 / ORS 571)</name>
    <dbReference type="NCBI Taxonomy" id="438753"/>
    <lineage>
        <taxon>Bacteria</taxon>
        <taxon>Pseudomonadati</taxon>
        <taxon>Pseudomonadota</taxon>
        <taxon>Alphaproteobacteria</taxon>
        <taxon>Hyphomicrobiales</taxon>
        <taxon>Xanthobacteraceae</taxon>
        <taxon>Azorhizobium</taxon>
    </lineage>
</organism>
<accession>A8ILP8</accession>
<evidence type="ECO:0000255" key="1">
    <source>
        <dbReference type="HAMAP-Rule" id="MF_00453"/>
    </source>
</evidence>
<name>PCKA_AZOC5</name>
<comment type="function">
    <text evidence="1">Involved in the gluconeogenesis. Catalyzes the conversion of oxaloacetate (OAA) to phosphoenolpyruvate (PEP) through direct phosphoryl transfer between the nucleoside triphosphate and OAA.</text>
</comment>
<comment type="catalytic activity">
    <reaction evidence="1">
        <text>oxaloacetate + ATP = phosphoenolpyruvate + ADP + CO2</text>
        <dbReference type="Rhea" id="RHEA:18617"/>
        <dbReference type="ChEBI" id="CHEBI:16452"/>
        <dbReference type="ChEBI" id="CHEBI:16526"/>
        <dbReference type="ChEBI" id="CHEBI:30616"/>
        <dbReference type="ChEBI" id="CHEBI:58702"/>
        <dbReference type="ChEBI" id="CHEBI:456216"/>
        <dbReference type="EC" id="4.1.1.49"/>
    </reaction>
</comment>
<comment type="cofactor">
    <cofactor evidence="1">
        <name>Mn(2+)</name>
        <dbReference type="ChEBI" id="CHEBI:29035"/>
    </cofactor>
    <text evidence="1">Binds 1 Mn(2+) ion per subunit.</text>
</comment>
<comment type="pathway">
    <text evidence="1">Carbohydrate biosynthesis; gluconeogenesis.</text>
</comment>
<comment type="subcellular location">
    <subcellularLocation>
        <location evidence="1">Cytoplasm</location>
    </subcellularLocation>
</comment>
<comment type="similarity">
    <text evidence="1">Belongs to the phosphoenolpyruvate carboxykinase (ATP) family.</text>
</comment>
<sequence>MIETGLRNSSQGIETFGLRNLAGVHWNLTEPQLYEHAIAKGEARLAAGGALAANTGVHTGRSPKDKFVVRDATTEGEVWWDNNGSITPEQFETLYQDFLAAAEGKTLFAQDLYGGADPAHRIAARVYTEYAWHSLFIRTMLRRPAREELPGYVPELTIIDLPSFKADPARHGVRSDTIIAVNFTRRIVLIGSSSYAGEMKKSVFTFLNYLLPAKGVMPMHCSANAGKDGDVALFFGLSGTGKTTLSADPARTLLGDDEHGWSNTGVFNFEGGCYAKTIRLSKEAEPEIFAASDRFGTILENVILHEDTRVPDFDDGSLTENTRSAYPLDFIPNASPTGRAGVPKNIIMLTADAFGVMPPIARLTPAQAMYHFLSGYTAKVAGTEKGVKDPEATFSTCFGAPFMPRHPSVYGNLLRDLIAKYQVDCWLVNTGWTGGKYGVGRRMPIKVTRTLLTAALDGSLKDAAFRTDPYFGFSVPSSVPGIEPHILYPSKTWADKADFDATARKLVAMFRDNFAKFEGHVDAAVRDAQPQVRIAAE</sequence>
<protein>
    <recommendedName>
        <fullName evidence="1">Phosphoenolpyruvate carboxykinase (ATP)</fullName>
        <shortName evidence="1">PCK</shortName>
        <shortName evidence="1">PEP carboxykinase</shortName>
        <shortName evidence="1">PEPCK</shortName>
        <ecNumber evidence="1">4.1.1.49</ecNumber>
    </recommendedName>
</protein>
<proteinExistence type="inferred from homology"/>
<keyword id="KW-0067">ATP-binding</keyword>
<keyword id="KW-0963">Cytoplasm</keyword>
<keyword id="KW-0210">Decarboxylase</keyword>
<keyword id="KW-0312">Gluconeogenesis</keyword>
<keyword id="KW-0456">Lyase</keyword>
<keyword id="KW-0464">Manganese</keyword>
<keyword id="KW-0479">Metal-binding</keyword>
<keyword id="KW-0547">Nucleotide-binding</keyword>
<keyword id="KW-1185">Reference proteome</keyword>
<gene>
    <name evidence="1" type="primary">pckA</name>
    <name type="ordered locus">AZC_4063</name>
</gene>
<feature type="chain" id="PRO_1000072373" description="Phosphoenolpyruvate carboxykinase (ATP)">
    <location>
        <begin position="1"/>
        <end position="537"/>
    </location>
</feature>
<feature type="binding site" evidence="1">
    <location>
        <position position="61"/>
    </location>
    <ligand>
        <name>substrate</name>
    </ligand>
</feature>
<feature type="binding site" evidence="1">
    <location>
        <position position="195"/>
    </location>
    <ligand>
        <name>substrate</name>
    </ligand>
</feature>
<feature type="binding site" evidence="1">
    <location>
        <position position="201"/>
    </location>
    <ligand>
        <name>ATP</name>
        <dbReference type="ChEBI" id="CHEBI:30616"/>
    </ligand>
</feature>
<feature type="binding site" evidence="1">
    <location>
        <position position="201"/>
    </location>
    <ligand>
        <name>Mn(2+)</name>
        <dbReference type="ChEBI" id="CHEBI:29035"/>
    </ligand>
</feature>
<feature type="binding site" evidence="1">
    <location>
        <position position="201"/>
    </location>
    <ligand>
        <name>substrate</name>
    </ligand>
</feature>
<feature type="binding site" evidence="1">
    <location>
        <position position="220"/>
    </location>
    <ligand>
        <name>ATP</name>
        <dbReference type="ChEBI" id="CHEBI:30616"/>
    </ligand>
</feature>
<feature type="binding site" evidence="1">
    <location>
        <position position="220"/>
    </location>
    <ligand>
        <name>Mn(2+)</name>
        <dbReference type="ChEBI" id="CHEBI:29035"/>
    </ligand>
</feature>
<feature type="binding site" evidence="1">
    <location>
        <begin position="236"/>
        <end position="244"/>
    </location>
    <ligand>
        <name>ATP</name>
        <dbReference type="ChEBI" id="CHEBI:30616"/>
    </ligand>
</feature>
<feature type="binding site" evidence="1">
    <location>
        <position position="257"/>
    </location>
    <ligand>
        <name>Mn(2+)</name>
        <dbReference type="ChEBI" id="CHEBI:29035"/>
    </ligand>
</feature>
<feature type="binding site" evidence="1">
    <location>
        <position position="285"/>
    </location>
    <ligand>
        <name>ATP</name>
        <dbReference type="ChEBI" id="CHEBI:30616"/>
    </ligand>
</feature>
<feature type="binding site" evidence="1">
    <location>
        <position position="323"/>
    </location>
    <ligand>
        <name>ATP</name>
        <dbReference type="ChEBI" id="CHEBI:30616"/>
    </ligand>
</feature>
<feature type="binding site" evidence="1">
    <location>
        <position position="323"/>
    </location>
    <ligand>
        <name>substrate</name>
    </ligand>
</feature>
<feature type="binding site" evidence="1">
    <location>
        <position position="448"/>
    </location>
    <ligand>
        <name>ATP</name>
        <dbReference type="ChEBI" id="CHEBI:30616"/>
    </ligand>
</feature>
<dbReference type="EC" id="4.1.1.49" evidence="1"/>
<dbReference type="EMBL" id="AP009384">
    <property type="protein sequence ID" value="BAF90061.1"/>
    <property type="molecule type" value="Genomic_DNA"/>
</dbReference>
<dbReference type="RefSeq" id="WP_012172583.1">
    <property type="nucleotide sequence ID" value="NC_009937.1"/>
</dbReference>
<dbReference type="SMR" id="A8ILP8"/>
<dbReference type="STRING" id="438753.AZC_4063"/>
<dbReference type="KEGG" id="azc:AZC_4063"/>
<dbReference type="eggNOG" id="COG1866">
    <property type="taxonomic scope" value="Bacteria"/>
</dbReference>
<dbReference type="HOGENOM" id="CLU_018247_0_1_5"/>
<dbReference type="UniPathway" id="UPA00138"/>
<dbReference type="Proteomes" id="UP000000270">
    <property type="component" value="Chromosome"/>
</dbReference>
<dbReference type="GO" id="GO:0005829">
    <property type="term" value="C:cytosol"/>
    <property type="evidence" value="ECO:0007669"/>
    <property type="project" value="TreeGrafter"/>
</dbReference>
<dbReference type="GO" id="GO:0005524">
    <property type="term" value="F:ATP binding"/>
    <property type="evidence" value="ECO:0007669"/>
    <property type="project" value="UniProtKB-UniRule"/>
</dbReference>
<dbReference type="GO" id="GO:0046872">
    <property type="term" value="F:metal ion binding"/>
    <property type="evidence" value="ECO:0007669"/>
    <property type="project" value="UniProtKB-KW"/>
</dbReference>
<dbReference type="GO" id="GO:0004612">
    <property type="term" value="F:phosphoenolpyruvate carboxykinase (ATP) activity"/>
    <property type="evidence" value="ECO:0007669"/>
    <property type="project" value="UniProtKB-UniRule"/>
</dbReference>
<dbReference type="GO" id="GO:0006094">
    <property type="term" value="P:gluconeogenesis"/>
    <property type="evidence" value="ECO:0007669"/>
    <property type="project" value="UniProtKB-UniRule"/>
</dbReference>
<dbReference type="CDD" id="cd00484">
    <property type="entry name" value="PEPCK_ATP"/>
    <property type="match status" value="1"/>
</dbReference>
<dbReference type="Gene3D" id="3.90.228.20">
    <property type="match status" value="1"/>
</dbReference>
<dbReference type="Gene3D" id="3.40.449.10">
    <property type="entry name" value="Phosphoenolpyruvate Carboxykinase, domain 1"/>
    <property type="match status" value="1"/>
</dbReference>
<dbReference type="Gene3D" id="2.170.8.10">
    <property type="entry name" value="Phosphoenolpyruvate Carboxykinase, domain 2"/>
    <property type="match status" value="1"/>
</dbReference>
<dbReference type="HAMAP" id="MF_00453">
    <property type="entry name" value="PEPCK_ATP"/>
    <property type="match status" value="1"/>
</dbReference>
<dbReference type="InterPro" id="IPR001272">
    <property type="entry name" value="PEP_carboxykinase_ATP"/>
</dbReference>
<dbReference type="InterPro" id="IPR013035">
    <property type="entry name" value="PEP_carboxykinase_C"/>
</dbReference>
<dbReference type="InterPro" id="IPR008210">
    <property type="entry name" value="PEP_carboxykinase_N"/>
</dbReference>
<dbReference type="NCBIfam" id="TIGR00224">
    <property type="entry name" value="pckA"/>
    <property type="match status" value="1"/>
</dbReference>
<dbReference type="NCBIfam" id="NF006820">
    <property type="entry name" value="PRK09344.1-2"/>
    <property type="match status" value="1"/>
</dbReference>
<dbReference type="NCBIfam" id="NF006821">
    <property type="entry name" value="PRK09344.1-3"/>
    <property type="match status" value="1"/>
</dbReference>
<dbReference type="NCBIfam" id="NF006822">
    <property type="entry name" value="PRK09344.1-4"/>
    <property type="match status" value="1"/>
</dbReference>
<dbReference type="PANTHER" id="PTHR30031:SF0">
    <property type="entry name" value="PHOSPHOENOLPYRUVATE CARBOXYKINASE (ATP)"/>
    <property type="match status" value="1"/>
</dbReference>
<dbReference type="PANTHER" id="PTHR30031">
    <property type="entry name" value="PHOSPHOENOLPYRUVATE CARBOXYKINASE ATP"/>
    <property type="match status" value="1"/>
</dbReference>
<dbReference type="Pfam" id="PF01293">
    <property type="entry name" value="PEPCK_ATP"/>
    <property type="match status" value="1"/>
</dbReference>
<dbReference type="PIRSF" id="PIRSF006294">
    <property type="entry name" value="PEP_crbxkin"/>
    <property type="match status" value="1"/>
</dbReference>
<dbReference type="SUPFAM" id="SSF68923">
    <property type="entry name" value="PEP carboxykinase N-terminal domain"/>
    <property type="match status" value="1"/>
</dbReference>
<dbReference type="SUPFAM" id="SSF53795">
    <property type="entry name" value="PEP carboxykinase-like"/>
    <property type="match status" value="1"/>
</dbReference>